<sequence>MNAGPGCEPCTKRPRWGAATTSPAASDARSFPSRQRRVLDPKDAHVQFRVPPSSPACVPGRAGQHRGSATSLVFKQKTITSWMDTKGIKTAESESLDSKENNNTRIESMMSSVQKDNFYQHNVEKLENVSQLSLDKSPTEKSTQYLNQHQTAAMCKWQNEGKHTEQLLESEPQTVTLVPEQFSNANIDRSPQNDDHSDTDSEENRDNQQFLTTVKLANAKQTTEDEQAREAKSHQKCSKSCDPGEDCASCQQDEIDVVPESPLSDVGSEDVGTGPKNDNKLTRQESCLGNSPPFEKESEPESPMDVDNSKNSCQDSEADEETSPGFDEQEDGSSSQTANKPSRFQARDADIEFRKRYSTKGGEVRLHFQFEGGESRTGMNDLNAKLPGNISSLNVECRNSKQHGKKDSKITDHFMRLPKAEDRRKEQWETKHQRTERKIPKYVPPHLSPDKKWLGTPIEEMRRMPRCGIRLPLLRPSANHTVTIRVDLLRAGEVPKPFPTHYKDLWDNKHVKMPCSEQNLYPVEDENGERTAGSRWELIQTALLNKFTRPQNLKDAILKYNVAYSKKWDFTALIDFWDKVLEEAEAQHLYQSILPDMVKIALCLPNICTQPIPLLKQKMNHSITMSQEQIASLLANAFFCTFPRRNAKMKSEYSSYPDINFNRLFEGRSSRKPEKLKTLFCYFRRVTEKKPTGLVTFTRQSLEDFPEWERCEKPLTRLHVTYEGTIEENGQGMLQVDFANRFVGGGVTSAGLVQEEIRFLINPELIISRLFTEVLDHNECLIITGTEQYSEYTGYAETYRWSRSHEDGSERDDWQRRCTEIVAIDALHFRRYLDQFVPEKMRRELNKAYCGFLRPGVSSENLSAVATGNWGCGAFGGDARLKALIQILAAAAAERDVVYFTFGDSELMRDIYSMHIFLTERKLTVGDVYKLLLRYYNEECRNCSTPGPDIKLYPFIYHAVESCAETADHSGQRTGT</sequence>
<keyword id="KW-0002">3D-structure</keyword>
<keyword id="KW-0007">Acetylation</keyword>
<keyword id="KW-0025">Alternative splicing</keyword>
<keyword id="KW-0963">Cytoplasm</keyword>
<keyword id="KW-0227">DNA damage</keyword>
<keyword id="KW-0378">Hydrolase</keyword>
<keyword id="KW-0496">Mitochondrion</keyword>
<keyword id="KW-0539">Nucleus</keyword>
<keyword id="KW-0597">Phosphoprotein</keyword>
<keyword id="KW-1267">Proteomics identification</keyword>
<keyword id="KW-1185">Reference proteome</keyword>
<organism>
    <name type="scientific">Homo sapiens</name>
    <name type="common">Human</name>
    <dbReference type="NCBI Taxonomy" id="9606"/>
    <lineage>
        <taxon>Eukaryota</taxon>
        <taxon>Metazoa</taxon>
        <taxon>Chordata</taxon>
        <taxon>Craniata</taxon>
        <taxon>Vertebrata</taxon>
        <taxon>Euteleostomi</taxon>
        <taxon>Mammalia</taxon>
        <taxon>Eutheria</taxon>
        <taxon>Euarchontoglires</taxon>
        <taxon>Primates</taxon>
        <taxon>Haplorrhini</taxon>
        <taxon>Catarrhini</taxon>
        <taxon>Hominidae</taxon>
        <taxon>Homo</taxon>
    </lineage>
</organism>
<dbReference type="EC" id="3.2.1.143" evidence="11 16"/>
<dbReference type="EMBL" id="AY258587">
    <property type="protein sequence ID" value="AAP83314.1"/>
    <property type="molecule type" value="mRNA"/>
</dbReference>
<dbReference type="EMBL" id="AY575848">
    <property type="protein sequence ID" value="AAT66421.1"/>
    <property type="molecule type" value="mRNA"/>
</dbReference>
<dbReference type="EMBL" id="AY575849">
    <property type="protein sequence ID" value="AAT66422.1"/>
    <property type="molecule type" value="mRNA"/>
</dbReference>
<dbReference type="EMBL" id="AF005043">
    <property type="protein sequence ID" value="AAB61614.1"/>
    <property type="molecule type" value="mRNA"/>
</dbReference>
<dbReference type="EMBL" id="EF382674">
    <property type="protein sequence ID" value="ABR10027.1"/>
    <property type="molecule type" value="mRNA"/>
</dbReference>
<dbReference type="EMBL" id="JQ890226">
    <property type="protein sequence ID" value="AFM56043.1"/>
    <property type="molecule type" value="mRNA"/>
</dbReference>
<dbReference type="EMBL" id="AK295786">
    <property type="protein sequence ID" value="BAG58607.1"/>
    <property type="molecule type" value="mRNA"/>
</dbReference>
<dbReference type="EMBL" id="AK302560">
    <property type="protein sequence ID" value="BAG63826.1"/>
    <property type="molecule type" value="mRNA"/>
</dbReference>
<dbReference type="EMBL" id="AK314909">
    <property type="protein sequence ID" value="BAG37421.1"/>
    <property type="molecule type" value="mRNA"/>
</dbReference>
<dbReference type="EMBL" id="BC050560">
    <property type="protein sequence ID" value="AAH50560.1"/>
    <property type="molecule type" value="mRNA"/>
</dbReference>
<dbReference type="EMBL" id="BC052966">
    <property type="protein sequence ID" value="AAH52966.1"/>
    <property type="molecule type" value="mRNA"/>
</dbReference>
<dbReference type="CCDS" id="CCDS73130.1">
    <molecule id="Q86W56-1"/>
</dbReference>
<dbReference type="RefSeq" id="NP_001290415.1">
    <molecule id="Q86W56-2"/>
    <property type="nucleotide sequence ID" value="NM_001303486.3"/>
</dbReference>
<dbReference type="RefSeq" id="NP_001290416.1">
    <molecule id="Q86W56-3"/>
    <property type="nucleotide sequence ID" value="NM_001303487.3"/>
</dbReference>
<dbReference type="RefSeq" id="NP_001311310.1">
    <molecule id="Q86W56-2"/>
    <property type="nucleotide sequence ID" value="NM_001324381.3"/>
</dbReference>
<dbReference type="RefSeq" id="NP_003622.2">
    <molecule id="Q86W56-1"/>
    <property type="nucleotide sequence ID" value="NM_003631.5"/>
</dbReference>
<dbReference type="PDB" id="4A0D">
    <property type="method" value="X-ray"/>
    <property type="resolution" value="1.75 A"/>
    <property type="chains" value="A=448-976"/>
</dbReference>
<dbReference type="PDB" id="4B1G">
    <property type="method" value="X-ray"/>
    <property type="resolution" value="1.83 A"/>
    <property type="chains" value="A=448-976"/>
</dbReference>
<dbReference type="PDB" id="4B1H">
    <property type="method" value="X-ray"/>
    <property type="resolution" value="2.00 A"/>
    <property type="chains" value="A=448-976"/>
</dbReference>
<dbReference type="PDB" id="4B1I">
    <property type="method" value="X-ray"/>
    <property type="resolution" value="2.14 A"/>
    <property type="chains" value="A=448-976"/>
</dbReference>
<dbReference type="PDB" id="4B1J">
    <property type="method" value="X-ray"/>
    <property type="resolution" value="2.08 A"/>
    <property type="chains" value="A=448-976"/>
</dbReference>
<dbReference type="PDB" id="5A7R">
    <property type="method" value="X-ray"/>
    <property type="resolution" value="1.95 A"/>
    <property type="chains" value="A=448-976"/>
</dbReference>
<dbReference type="PDB" id="5LHB">
    <property type="method" value="X-ray"/>
    <property type="resolution" value="2.23 A"/>
    <property type="chains" value="A=448-976"/>
</dbReference>
<dbReference type="PDB" id="6HH6">
    <property type="method" value="X-ray"/>
    <property type="resolution" value="1.85 A"/>
    <property type="chains" value="A=448-976"/>
</dbReference>
<dbReference type="PDB" id="6HMK">
    <property type="method" value="X-ray"/>
    <property type="resolution" value="2.06 A"/>
    <property type="chains" value="A=448-976"/>
</dbReference>
<dbReference type="PDB" id="6HML">
    <property type="method" value="X-ray"/>
    <property type="resolution" value="2.25 A"/>
    <property type="chains" value="A=448-976"/>
</dbReference>
<dbReference type="PDB" id="6HMM">
    <property type="method" value="X-ray"/>
    <property type="resolution" value="1.90 A"/>
    <property type="chains" value="A=448-976"/>
</dbReference>
<dbReference type="PDB" id="6HMN">
    <property type="method" value="X-ray"/>
    <property type="resolution" value="2.87 A"/>
    <property type="chains" value="A=448-976"/>
</dbReference>
<dbReference type="PDB" id="6O9X">
    <property type="method" value="X-ray"/>
    <property type="resolution" value="1.70 A"/>
    <property type="chains" value="A=448-976"/>
</dbReference>
<dbReference type="PDB" id="6O9Y">
    <property type="method" value="X-ray"/>
    <property type="resolution" value="2.00 A"/>
    <property type="chains" value="A=448-976"/>
</dbReference>
<dbReference type="PDB" id="6OA0">
    <property type="method" value="X-ray"/>
    <property type="resolution" value="2.00 A"/>
    <property type="chains" value="A=448-976"/>
</dbReference>
<dbReference type="PDB" id="6OA1">
    <property type="method" value="X-ray"/>
    <property type="resolution" value="1.80 A"/>
    <property type="chains" value="A=448-976"/>
</dbReference>
<dbReference type="PDB" id="6OA3">
    <property type="method" value="X-ray"/>
    <property type="resolution" value="1.90 A"/>
    <property type="chains" value="A=448-976"/>
</dbReference>
<dbReference type="PDB" id="6OAK">
    <property type="method" value="X-ray"/>
    <property type="resolution" value="1.70 A"/>
    <property type="chains" value="A=448-976"/>
</dbReference>
<dbReference type="PDB" id="6OAL">
    <property type="method" value="X-ray"/>
    <property type="resolution" value="1.60 A"/>
    <property type="chains" value="A=448-976"/>
</dbReference>
<dbReference type="PDB" id="7KFP">
    <property type="method" value="X-ray"/>
    <property type="resolution" value="1.90 A"/>
    <property type="chains" value="A=448-976"/>
</dbReference>
<dbReference type="PDB" id="7KG0">
    <property type="method" value="X-ray"/>
    <property type="resolution" value="1.66 A"/>
    <property type="chains" value="A=448-976"/>
</dbReference>
<dbReference type="PDB" id="7KG1">
    <property type="method" value="X-ray"/>
    <property type="resolution" value="1.65 A"/>
    <property type="chains" value="A=448-976"/>
</dbReference>
<dbReference type="PDB" id="7KG6">
    <property type="method" value="X-ray"/>
    <property type="resolution" value="1.96 A"/>
    <property type="chains" value="A=448-976"/>
</dbReference>
<dbReference type="PDB" id="7KG7">
    <property type="method" value="X-ray"/>
    <property type="resolution" value="1.85 A"/>
    <property type="chains" value="A=448-976"/>
</dbReference>
<dbReference type="PDB" id="7KG8">
    <property type="method" value="X-ray"/>
    <property type="resolution" value="1.43 A"/>
    <property type="chains" value="A=448-976"/>
</dbReference>
<dbReference type="PDBsum" id="4A0D"/>
<dbReference type="PDBsum" id="4B1G"/>
<dbReference type="PDBsum" id="4B1H"/>
<dbReference type="PDBsum" id="4B1I"/>
<dbReference type="PDBsum" id="4B1J"/>
<dbReference type="PDBsum" id="5A7R"/>
<dbReference type="PDBsum" id="5LHB"/>
<dbReference type="PDBsum" id="6HH6"/>
<dbReference type="PDBsum" id="6HMK"/>
<dbReference type="PDBsum" id="6HML"/>
<dbReference type="PDBsum" id="6HMM"/>
<dbReference type="PDBsum" id="6HMN"/>
<dbReference type="PDBsum" id="6O9X"/>
<dbReference type="PDBsum" id="6O9Y"/>
<dbReference type="PDBsum" id="6OA0"/>
<dbReference type="PDBsum" id="6OA1"/>
<dbReference type="PDBsum" id="6OA3"/>
<dbReference type="PDBsum" id="6OAK"/>
<dbReference type="PDBsum" id="6OAL"/>
<dbReference type="PDBsum" id="7KFP"/>
<dbReference type="PDBsum" id="7KG0"/>
<dbReference type="PDBsum" id="7KG1"/>
<dbReference type="PDBsum" id="7KG6"/>
<dbReference type="PDBsum" id="7KG7"/>
<dbReference type="PDBsum" id="7KG8"/>
<dbReference type="SMR" id="Q86W56"/>
<dbReference type="BioGRID" id="114077">
    <property type="interactions" value="28"/>
</dbReference>
<dbReference type="CORUM" id="Q86W56"/>
<dbReference type="FunCoup" id="Q86W56">
    <property type="interactions" value="4404"/>
</dbReference>
<dbReference type="IntAct" id="Q86W56">
    <property type="interactions" value="8"/>
</dbReference>
<dbReference type="MINT" id="Q86W56"/>
<dbReference type="STRING" id="9606.ENSP00000384408"/>
<dbReference type="BindingDB" id="Q86W56"/>
<dbReference type="ChEMBL" id="CHEMBL1795143"/>
<dbReference type="DrugCentral" id="Q86W56"/>
<dbReference type="GlyGen" id="Q86W56">
    <property type="glycosylation" value="2 sites, 1 N-linked glycan (1 site), 1 O-linked glycan (1 site)"/>
</dbReference>
<dbReference type="iPTMnet" id="Q86W56"/>
<dbReference type="PhosphoSitePlus" id="Q86W56"/>
<dbReference type="SwissPalm" id="Q86W56"/>
<dbReference type="BioMuta" id="PARG"/>
<dbReference type="DMDM" id="56417893"/>
<dbReference type="jPOST" id="Q86W56"/>
<dbReference type="MassIVE" id="Q86W56"/>
<dbReference type="PaxDb" id="9606-ENSP00000384408"/>
<dbReference type="PeptideAtlas" id="Q86W56"/>
<dbReference type="ProteomicsDB" id="70121">
    <molecule id="Q86W56-1"/>
</dbReference>
<dbReference type="ProteomicsDB" id="70122">
    <molecule id="Q86W56-2"/>
</dbReference>
<dbReference type="ProteomicsDB" id="70123">
    <molecule id="Q86W56-3"/>
</dbReference>
<dbReference type="Pumba" id="Q86W56"/>
<dbReference type="Antibodypedia" id="44981">
    <property type="antibodies" value="243 antibodies from 27 providers"/>
</dbReference>
<dbReference type="DNASU" id="670"/>
<dbReference type="Ensembl" id="ENST00000402038.7">
    <molecule id="Q86W56-1"/>
    <property type="protein sequence ID" value="ENSP00000384408.3"/>
    <property type="gene ID" value="ENSG00000227345.9"/>
</dbReference>
<dbReference type="Ensembl" id="ENST00000616448.2">
    <molecule id="Q86W56-1"/>
    <property type="protein sequence ID" value="ENSP00000484285.1"/>
    <property type="gene ID" value="ENSG00000227345.9"/>
</dbReference>
<dbReference type="GeneID" id="8505"/>
<dbReference type="KEGG" id="hsa:8505"/>
<dbReference type="MANE-Select" id="ENST00000616448.2">
    <property type="protein sequence ID" value="ENSP00000484285.1"/>
    <property type="RefSeq nucleotide sequence ID" value="NM_003631.5"/>
    <property type="RefSeq protein sequence ID" value="NP_003622.2"/>
</dbReference>
<dbReference type="UCSC" id="uc057tfe.1">
    <molecule id="Q86W56-1"/>
    <property type="organism name" value="human"/>
</dbReference>
<dbReference type="AGR" id="HGNC:1094"/>
<dbReference type="AGR" id="HGNC:8605"/>
<dbReference type="CTD" id="670"/>
<dbReference type="CTD" id="8505"/>
<dbReference type="DisGeNET" id="670"/>
<dbReference type="DisGeNET" id="8505"/>
<dbReference type="GeneCards" id="PARG"/>
<dbReference type="HGNC" id="HGNC:8605">
    <property type="gene designation" value="PARG"/>
</dbReference>
<dbReference type="HPA" id="ENSG00000227345">
    <property type="expression patterns" value="Low tissue specificity"/>
</dbReference>
<dbReference type="MIM" id="603501">
    <property type="type" value="gene"/>
</dbReference>
<dbReference type="neXtProt" id="NX_Q86W56"/>
<dbReference type="OpenTargets" id="ENSG00000227345"/>
<dbReference type="PharmGKB" id="PA32940"/>
<dbReference type="VEuPathDB" id="HostDB:ENSG00000227345"/>
<dbReference type="eggNOG" id="KOG2064">
    <property type="taxonomic scope" value="Eukaryota"/>
</dbReference>
<dbReference type="GeneTree" id="ENSGT00390000003652"/>
<dbReference type="HOGENOM" id="CLU_015146_0_0_1"/>
<dbReference type="InParanoid" id="Q86W56"/>
<dbReference type="OMA" id="QNEGKHM"/>
<dbReference type="OrthoDB" id="1937899at2759"/>
<dbReference type="PAN-GO" id="Q86W56">
    <property type="GO annotations" value="7 GO annotations based on evolutionary models"/>
</dbReference>
<dbReference type="PhylomeDB" id="Q86W56"/>
<dbReference type="TreeFam" id="TF323527"/>
<dbReference type="BRENDA" id="3.2.1.143">
    <property type="organism ID" value="2681"/>
</dbReference>
<dbReference type="PathwayCommons" id="Q86W56"/>
<dbReference type="Reactome" id="R-HSA-110362">
    <property type="pathway name" value="POLB-Dependent Long Patch Base Excision Repair"/>
</dbReference>
<dbReference type="SignaLink" id="Q86W56"/>
<dbReference type="BioGRID-ORCS" id="670">
    <property type="hits" value="11 hits in 1164 CRISPR screens"/>
</dbReference>
<dbReference type="BioGRID-ORCS" id="8505">
    <property type="hits" value="45 hits in 294 CRISPR screens"/>
</dbReference>
<dbReference type="CD-CODE" id="8C2F96ED">
    <property type="entry name" value="Centrosome"/>
</dbReference>
<dbReference type="CD-CODE" id="DEE660B4">
    <property type="entry name" value="Stress granule"/>
</dbReference>
<dbReference type="ChiTaRS" id="PARG">
    <property type="organism name" value="human"/>
</dbReference>
<dbReference type="EvolutionaryTrace" id="Q86W56"/>
<dbReference type="GeneWiki" id="PARG"/>
<dbReference type="Pharos" id="Q86W56">
    <property type="development level" value="Tchem"/>
</dbReference>
<dbReference type="PRO" id="PR:Q86W56"/>
<dbReference type="Proteomes" id="UP000005640">
    <property type="component" value="Chromosome 10"/>
</dbReference>
<dbReference type="RNAct" id="Q86W56">
    <property type="molecule type" value="protein"/>
</dbReference>
<dbReference type="Bgee" id="ENSG00000227345">
    <property type="expression patterns" value="Expressed in calcaneal tendon and 170 other cell types or tissues"/>
</dbReference>
<dbReference type="ExpressionAtlas" id="Q86W56">
    <property type="expression patterns" value="baseline and differential"/>
</dbReference>
<dbReference type="GO" id="GO:0005737">
    <property type="term" value="C:cytoplasm"/>
    <property type="evidence" value="ECO:0000318"/>
    <property type="project" value="GO_Central"/>
</dbReference>
<dbReference type="GO" id="GO:0005829">
    <property type="term" value="C:cytosol"/>
    <property type="evidence" value="ECO:0000314"/>
    <property type="project" value="HPA"/>
</dbReference>
<dbReference type="GO" id="GO:0005759">
    <property type="term" value="C:mitochondrial matrix"/>
    <property type="evidence" value="ECO:0007669"/>
    <property type="project" value="UniProtKB-SubCell"/>
</dbReference>
<dbReference type="GO" id="GO:0016604">
    <property type="term" value="C:nuclear body"/>
    <property type="evidence" value="ECO:0000314"/>
    <property type="project" value="HPA"/>
</dbReference>
<dbReference type="GO" id="GO:0005654">
    <property type="term" value="C:nucleoplasm"/>
    <property type="evidence" value="ECO:0000314"/>
    <property type="project" value="HPA"/>
</dbReference>
<dbReference type="GO" id="GO:0005634">
    <property type="term" value="C:nucleus"/>
    <property type="evidence" value="ECO:0000314"/>
    <property type="project" value="CACAO"/>
</dbReference>
<dbReference type="GO" id="GO:0004649">
    <property type="term" value="F:poly(ADP-ribose) glycohydrolase activity"/>
    <property type="evidence" value="ECO:0000314"/>
    <property type="project" value="UniProtKB"/>
</dbReference>
<dbReference type="GO" id="GO:1990966">
    <property type="term" value="P:ATP generation from poly-ADP-D-ribose"/>
    <property type="evidence" value="ECO:0000314"/>
    <property type="project" value="UniProtKB"/>
</dbReference>
<dbReference type="GO" id="GO:0006287">
    <property type="term" value="P:base-excision repair, gap-filling"/>
    <property type="evidence" value="ECO:0000304"/>
    <property type="project" value="Reactome"/>
</dbReference>
<dbReference type="GO" id="GO:0005975">
    <property type="term" value="P:carbohydrate metabolic process"/>
    <property type="evidence" value="ECO:0007669"/>
    <property type="project" value="InterPro"/>
</dbReference>
<dbReference type="GO" id="GO:0009225">
    <property type="term" value="P:nucleotide-sugar metabolic process"/>
    <property type="evidence" value="ECO:0000318"/>
    <property type="project" value="GO_Central"/>
</dbReference>
<dbReference type="GO" id="GO:0006282">
    <property type="term" value="P:regulation of DNA repair"/>
    <property type="evidence" value="ECO:0000318"/>
    <property type="project" value="GO_Central"/>
</dbReference>
<dbReference type="InterPro" id="IPR046372">
    <property type="entry name" value="PARG_cat_C"/>
</dbReference>
<dbReference type="InterPro" id="IPR048362">
    <property type="entry name" value="PARG_helical"/>
</dbReference>
<dbReference type="InterPro" id="IPR007724">
    <property type="entry name" value="Poly_GlycHdrlase"/>
</dbReference>
<dbReference type="PANTHER" id="PTHR12837">
    <property type="entry name" value="POLY ADP-RIBOSE GLYCOHYDROLASE"/>
    <property type="match status" value="1"/>
</dbReference>
<dbReference type="PANTHER" id="PTHR12837:SF15">
    <property type="entry name" value="POLY(ADP-RIBOSE) GLYCOHYDROLASE"/>
    <property type="match status" value="1"/>
</dbReference>
<dbReference type="Pfam" id="PF05028">
    <property type="entry name" value="PARG_cat_C"/>
    <property type="match status" value="1"/>
</dbReference>
<dbReference type="Pfam" id="PF20811">
    <property type="entry name" value="PARG_cat_N"/>
    <property type="match status" value="1"/>
</dbReference>
<accession>Q86W56</accession>
<accession>A5YBK3</accession>
<accession>B2RC24</accession>
<accession>B4DIU5</accession>
<accession>B4DYR4</accession>
<accession>I6RUV3</accession>
<accession>Q6E4P6</accession>
<accession>Q6E4P7</accession>
<accession>Q7Z742</accession>
<accession>Q9Y4W7</accession>
<reference key="1">
    <citation type="journal article" date="2003" name="Gene">
        <title>Human poly(ADP-ribose) glycohydrolase (PARG) gene and the common promoter sequence it shares with inner mitochondrial membrane translocase 23 (TIM23).</title>
        <authorList>
            <person name="Meyer R.G."/>
            <person name="Meyer-Ficca M.L."/>
            <person name="Jacobson E.L."/>
            <person name="Jacobson M.K."/>
        </authorList>
    </citation>
    <scope>NUCLEOTIDE SEQUENCE [MRNA] (ISOFORM 1)</scope>
    <scope>TISSUE SPECIFICITY</scope>
    <source>
        <tissue>Skin</tissue>
    </source>
</reference>
<reference key="2">
    <citation type="journal article" date="2004" name="Exp. Cell Res.">
        <title>Human poly(ADP-ribose) glycohydrolase is expressed in alternative splice variants yielding isoforms that localize to different cell compartments.</title>
        <authorList>
            <person name="Meyer-Ficca M.L."/>
            <person name="Meyer R.G."/>
            <person name="Coyle D.L."/>
            <person name="Jacobson E.L."/>
            <person name="Jacobson M.K."/>
        </authorList>
    </citation>
    <scope>NUCLEOTIDE SEQUENCE [MRNA] (ISOFORMS 2 AND 3)</scope>
    <scope>MUTAGENESIS OF LYS-12; ARG-13; ARG-36 AND ARG-37</scope>
    <scope>SUBCELLULAR LOCATION</scope>
    <scope>NUCLEAR LOCALIZATION SIGNAL</scope>
    <source>
        <tissue>Skin</tissue>
    </source>
</reference>
<reference key="3">
    <citation type="journal article" date="1999" name="Cytogenet. Cell Genet.">
        <title>Assignment of the poly(ADP-ribose) glycohydrolase gene (PARG) to human chromosome 10q11.23 and mouse chromosome 14B by in situ hybridization.</title>
        <authorList>
            <person name="Ame J.-C."/>
            <person name="Apiou F."/>
            <person name="Jacobson E.L."/>
            <person name="Jacobson M.K."/>
        </authorList>
    </citation>
    <scope>NUCLEOTIDE SEQUENCE [MRNA] (ISOFORM 1)</scope>
</reference>
<reference key="4">
    <citation type="journal article" date="2007" name="Exp. Cell Res.">
        <title>Two small enzyme isoforms mediate mammalian mitochondrial poly(ADP-ribose) glycohydrolase (PARG) activity.</title>
        <authorList>
            <person name="Meyer R.G."/>
            <person name="Meyer-Ficca M.L."/>
            <person name="Whatcott C.J."/>
            <person name="Jacobson E.L."/>
            <person name="Jacobson M.K."/>
        </authorList>
    </citation>
    <scope>NUCLEOTIDE SEQUENCE [MRNA] (ISOFORM 5)</scope>
    <scope>SUBCELLULAR LOCATION</scope>
    <source>
        <tissue>Testis</tissue>
    </source>
</reference>
<reference key="5">
    <citation type="journal article" date="2012" name="J. Biol. Chem.">
        <title>ADP-ribosylhydrolase 3 (ARH3), not poly(ADP-ribose) glycohydrolase (PARG) isoforms, is responsible for degradation of mitochondrial matrix-associated poly(ADP-ribose).</title>
        <authorList>
            <person name="Niere M."/>
            <person name="Mashimo M."/>
            <person name="Agledal L."/>
            <person name="Dolle C."/>
            <person name="Kasamatsu A."/>
            <person name="Kato J."/>
            <person name="Moss J."/>
            <person name="Ziegler M."/>
        </authorList>
    </citation>
    <scope>NUCLEOTIDE SEQUENCE [MRNA] (ISOFORM 4)</scope>
    <scope>ALTERNATIVE SPLICING (ISOFORMS 4 AND 5)</scope>
    <scope>ABSENCE OF CATALYTIC ACTIVITY (ISOFORMS 4 AND 5)</scope>
    <scope>SUBCELLULAR LOCATION</scope>
    <source>
        <tissue>Peripheral blood monocyte</tissue>
    </source>
</reference>
<reference key="6">
    <citation type="journal article" date="2004" name="Nat. Genet.">
        <title>Complete sequencing and characterization of 21,243 full-length human cDNAs.</title>
        <authorList>
            <person name="Ota T."/>
            <person name="Suzuki Y."/>
            <person name="Nishikawa T."/>
            <person name="Otsuki T."/>
            <person name="Sugiyama T."/>
            <person name="Irie R."/>
            <person name="Wakamatsu A."/>
            <person name="Hayashi K."/>
            <person name="Sato H."/>
            <person name="Nagai K."/>
            <person name="Kimura K."/>
            <person name="Makita H."/>
            <person name="Sekine M."/>
            <person name="Obayashi M."/>
            <person name="Nishi T."/>
            <person name="Shibahara T."/>
            <person name="Tanaka T."/>
            <person name="Ishii S."/>
            <person name="Yamamoto J."/>
            <person name="Saito K."/>
            <person name="Kawai Y."/>
            <person name="Isono Y."/>
            <person name="Nakamura Y."/>
            <person name="Nagahari K."/>
            <person name="Murakami K."/>
            <person name="Yasuda T."/>
            <person name="Iwayanagi T."/>
            <person name="Wagatsuma M."/>
            <person name="Shiratori A."/>
            <person name="Sudo H."/>
            <person name="Hosoiri T."/>
            <person name="Kaku Y."/>
            <person name="Kodaira H."/>
            <person name="Kondo H."/>
            <person name="Sugawara M."/>
            <person name="Takahashi M."/>
            <person name="Kanda K."/>
            <person name="Yokoi T."/>
            <person name="Furuya T."/>
            <person name="Kikkawa E."/>
            <person name="Omura Y."/>
            <person name="Abe K."/>
            <person name="Kamihara K."/>
            <person name="Katsuta N."/>
            <person name="Sato K."/>
            <person name="Tanikawa M."/>
            <person name="Yamazaki M."/>
            <person name="Ninomiya K."/>
            <person name="Ishibashi T."/>
            <person name="Yamashita H."/>
            <person name="Murakawa K."/>
            <person name="Fujimori K."/>
            <person name="Tanai H."/>
            <person name="Kimata M."/>
            <person name="Watanabe M."/>
            <person name="Hiraoka S."/>
            <person name="Chiba Y."/>
            <person name="Ishida S."/>
            <person name="Ono Y."/>
            <person name="Takiguchi S."/>
            <person name="Watanabe S."/>
            <person name="Yosida M."/>
            <person name="Hotuta T."/>
            <person name="Kusano J."/>
            <person name="Kanehori K."/>
            <person name="Takahashi-Fujii A."/>
            <person name="Hara H."/>
            <person name="Tanase T.-O."/>
            <person name="Nomura Y."/>
            <person name="Togiya S."/>
            <person name="Komai F."/>
            <person name="Hara R."/>
            <person name="Takeuchi K."/>
            <person name="Arita M."/>
            <person name="Imose N."/>
            <person name="Musashino K."/>
            <person name="Yuuki H."/>
            <person name="Oshima A."/>
            <person name="Sasaki N."/>
            <person name="Aotsuka S."/>
            <person name="Yoshikawa Y."/>
            <person name="Matsunawa H."/>
            <person name="Ichihara T."/>
            <person name="Shiohata N."/>
            <person name="Sano S."/>
            <person name="Moriya S."/>
            <person name="Momiyama H."/>
            <person name="Satoh N."/>
            <person name="Takami S."/>
            <person name="Terashima Y."/>
            <person name="Suzuki O."/>
            <person name="Nakagawa S."/>
            <person name="Senoh A."/>
            <person name="Mizoguchi H."/>
            <person name="Goto Y."/>
            <person name="Shimizu F."/>
            <person name="Wakebe H."/>
            <person name="Hishigaki H."/>
            <person name="Watanabe T."/>
            <person name="Sugiyama A."/>
            <person name="Takemoto M."/>
            <person name="Kawakami B."/>
            <person name="Yamazaki M."/>
            <person name="Watanabe K."/>
            <person name="Kumagai A."/>
            <person name="Itakura S."/>
            <person name="Fukuzumi Y."/>
            <person name="Fujimori Y."/>
            <person name="Komiyama M."/>
            <person name="Tashiro H."/>
            <person name="Tanigami A."/>
            <person name="Fujiwara T."/>
            <person name="Ono T."/>
            <person name="Yamada K."/>
            <person name="Fujii Y."/>
            <person name="Ozaki K."/>
            <person name="Hirao M."/>
            <person name="Ohmori Y."/>
            <person name="Kawabata A."/>
            <person name="Hikiji T."/>
            <person name="Kobatake N."/>
            <person name="Inagaki H."/>
            <person name="Ikema Y."/>
            <person name="Okamoto S."/>
            <person name="Okitani R."/>
            <person name="Kawakami T."/>
            <person name="Noguchi S."/>
            <person name="Itoh T."/>
            <person name="Shigeta K."/>
            <person name="Senba T."/>
            <person name="Matsumura K."/>
            <person name="Nakajima Y."/>
            <person name="Mizuno T."/>
            <person name="Morinaga M."/>
            <person name="Sasaki M."/>
            <person name="Togashi T."/>
            <person name="Oyama M."/>
            <person name="Hata H."/>
            <person name="Watanabe M."/>
            <person name="Komatsu T."/>
            <person name="Mizushima-Sugano J."/>
            <person name="Satoh T."/>
            <person name="Shirai Y."/>
            <person name="Takahashi Y."/>
            <person name="Nakagawa K."/>
            <person name="Okumura K."/>
            <person name="Nagase T."/>
            <person name="Nomura N."/>
            <person name="Kikuchi H."/>
            <person name="Masuho Y."/>
            <person name="Yamashita R."/>
            <person name="Nakai K."/>
            <person name="Yada T."/>
            <person name="Nakamura Y."/>
            <person name="Ohara O."/>
            <person name="Isogai T."/>
            <person name="Sugano S."/>
        </authorList>
    </citation>
    <scope>NUCLEOTIDE SEQUENCE [LARGE SCALE MRNA] (ISOFORMS 2 AND 3)</scope>
    <source>
        <tissue>Brain cortex</tissue>
        <tissue>Hippocampus</tissue>
        <tissue>Testis</tissue>
    </source>
</reference>
<reference key="7">
    <citation type="journal article" date="2004" name="Genome Res.">
        <title>The status, quality, and expansion of the NIH full-length cDNA project: the Mammalian Gene Collection (MGC).</title>
        <authorList>
            <consortium name="The MGC Project Team"/>
        </authorList>
    </citation>
    <scope>NUCLEOTIDE SEQUENCE [LARGE SCALE MRNA] (ISOFORM 1)</scope>
    <source>
        <tissue>Skin</tissue>
        <tissue>Testis</tissue>
    </source>
</reference>
<reference key="8">
    <citation type="journal article" date="2004" name="Anal. Biochem.">
        <title>A nonradiometric, high-throughput assay for poly(ADP-ribose) glycohydrolase (PARG): application to inhibitor identification and evaluation.</title>
        <authorList>
            <person name="Putt K.S."/>
            <person name="Hergenrother P.J."/>
        </authorList>
    </citation>
    <scope>FUNCTION</scope>
</reference>
<reference key="9">
    <citation type="journal article" date="2006" name="Biochim. Biophys. Acta">
        <title>Dynamic relocation of poly(ADP-ribose) glycohydrolase isoforms during radiation-induced DNA damage.</title>
        <authorList>
            <person name="Haince J.F."/>
            <person name="Ouellet M.E."/>
            <person name="McDonald D."/>
            <person name="Hendzel M.J."/>
            <person name="Poirier G.G."/>
        </authorList>
    </citation>
    <scope>SUBCELLULAR LOCATION (ISOFORMS 1 AND 2)</scope>
</reference>
<reference key="10">
    <citation type="journal article" date="2006" name="Nat. Biotechnol.">
        <title>A probability-based approach for high-throughput protein phosphorylation analysis and site localization.</title>
        <authorList>
            <person name="Beausoleil S.A."/>
            <person name="Villen J."/>
            <person name="Gerber S.A."/>
            <person name="Rush J."/>
            <person name="Gygi S.P."/>
        </authorList>
    </citation>
    <scope>IDENTIFICATION BY MASS SPECTROMETRY [LARGE SCALE ANALYSIS]</scope>
    <source>
        <tissue>Cervix carcinoma</tissue>
    </source>
</reference>
<reference key="11">
    <citation type="journal article" date="2008" name="Proc. Natl. Acad. Sci. U.S.A.">
        <title>A quantitative atlas of mitotic phosphorylation.</title>
        <authorList>
            <person name="Dephoure N."/>
            <person name="Zhou C."/>
            <person name="Villen J."/>
            <person name="Beausoleil S.A."/>
            <person name="Bakalarski C.E."/>
            <person name="Elledge S.J."/>
            <person name="Gygi S.P."/>
        </authorList>
    </citation>
    <scope>PHOSPHORYLATION [LARGE SCALE ANALYSIS] AT SER-133; SER-137; SER-197 AND THR-199</scope>
    <scope>IDENTIFICATION BY MASS SPECTROMETRY [LARGE SCALE ANALYSIS]</scope>
    <source>
        <tissue>Cervix carcinoma</tissue>
    </source>
</reference>
<reference key="12">
    <citation type="journal article" date="2009" name="J. Proteome Res.">
        <title>Proteomic investigation of phosphorylation sites in poly(ADP-ribose) polymerase-1 and poly(ADP-ribose) glycohydrolase.</title>
        <authorList>
            <person name="Gagne J.P."/>
            <person name="Moreel X."/>
            <person name="Gagne P."/>
            <person name="Labelle Y."/>
            <person name="Droit A."/>
            <person name="Chevalier-Pare M."/>
            <person name="Bourassa S."/>
            <person name="McDonald D."/>
            <person name="Hendzel M.J."/>
            <person name="Prigent C."/>
            <person name="Poirier G.G."/>
        </authorList>
    </citation>
    <scope>PHOSPHORYLATION AT SER-197; THR-199 AND SER-298</scope>
</reference>
<reference key="13">
    <citation type="journal article" date="2009" name="Sci. Signal.">
        <title>Quantitative phosphoproteomic analysis of T cell receptor signaling reveals system-wide modulation of protein-protein interactions.</title>
        <authorList>
            <person name="Mayya V."/>
            <person name="Lundgren D.H."/>
            <person name="Hwang S.-I."/>
            <person name="Rezaul K."/>
            <person name="Wu L."/>
            <person name="Eng J.K."/>
            <person name="Rodionov V."/>
            <person name="Han D.K."/>
        </authorList>
    </citation>
    <scope>PHOSPHORYLATION [LARGE SCALE ANALYSIS] AT SER-197 AND THR-199</scope>
    <scope>IDENTIFICATION BY MASS SPECTROMETRY [LARGE SCALE ANALYSIS]</scope>
    <source>
        <tissue>Leukemic T-cell</tissue>
    </source>
</reference>
<reference key="14">
    <citation type="journal article" date="2010" name="Sci. Signal.">
        <title>Quantitative phosphoproteomics reveals widespread full phosphorylation site occupancy during mitosis.</title>
        <authorList>
            <person name="Olsen J.V."/>
            <person name="Vermeulen M."/>
            <person name="Santamaria A."/>
            <person name="Kumar C."/>
            <person name="Miller M.L."/>
            <person name="Jensen L.J."/>
            <person name="Gnad F."/>
            <person name="Cox J."/>
            <person name="Jensen T.S."/>
            <person name="Nigg E.A."/>
            <person name="Brunak S."/>
            <person name="Mann M."/>
        </authorList>
    </citation>
    <scope>IDENTIFICATION BY MASS SPECTROMETRY [LARGE SCALE ANALYSIS]</scope>
    <source>
        <tissue>Cervix carcinoma</tissue>
    </source>
</reference>
<reference key="15">
    <citation type="journal article" date="2011" name="BMC Syst. Biol.">
        <title>Initial characterization of the human central proteome.</title>
        <authorList>
            <person name="Burkard T.R."/>
            <person name="Planyavsky M."/>
            <person name="Kaupe I."/>
            <person name="Breitwieser F.P."/>
            <person name="Buerckstuemmer T."/>
            <person name="Bennett K.L."/>
            <person name="Superti-Furga G."/>
            <person name="Colinge J."/>
        </authorList>
    </citation>
    <scope>IDENTIFICATION BY MASS SPECTROMETRY [LARGE SCALE ANALYSIS]</scope>
</reference>
<reference key="16">
    <citation type="journal article" date="2011" name="Nature">
        <title>The structure and catalytic mechanism of a poly(ADP-ribose) glycohydrolase.</title>
        <authorList>
            <person name="Slade D."/>
            <person name="Dunstan M.S."/>
            <person name="Barkauskaite E."/>
            <person name="Weston R."/>
            <person name="Lafite P."/>
            <person name="Dixon N."/>
            <person name="Ahel M."/>
            <person name="Leys D."/>
            <person name="Ahel I."/>
        </authorList>
    </citation>
    <scope>FUNCTION</scope>
    <scope>CATALYTIC ACTIVITY</scope>
    <scope>ACTIVE SITE</scope>
    <scope>MUTAGENESIS OF ASN-740; GLU-755; GLU-756; ALA-874 AND PHE-875</scope>
</reference>
<reference key="17">
    <citation type="journal article" date="2011" name="Nucleic Acids Res.">
        <title>PARG is recruited to DNA damage sites through poly(ADP-ribose)- and PCNA-dependent mechanisms.</title>
        <authorList>
            <person name="Mortusewicz O."/>
            <person name="Fouquerel E."/>
            <person name="Ame J.C."/>
            <person name="Leonhardt H."/>
            <person name="Schreiber V."/>
        </authorList>
    </citation>
    <scope>SUBCELLULAR LOCATION (ISOFORM 1)</scope>
    <scope>INTERACTION WITH PCNA</scope>
</reference>
<reference key="18">
    <citation type="journal article" date="2011" name="Sci. Signal.">
        <title>System-wide temporal characterization of the proteome and phosphoproteome of human embryonic stem cell differentiation.</title>
        <authorList>
            <person name="Rigbolt K.T."/>
            <person name="Prokhorova T.A."/>
            <person name="Akimov V."/>
            <person name="Henningsen J."/>
            <person name="Johansen P.T."/>
            <person name="Kratchmarova I."/>
            <person name="Kassem M."/>
            <person name="Mann M."/>
            <person name="Olsen J.V."/>
            <person name="Blagoev B."/>
        </authorList>
    </citation>
    <scope>PHOSPHORYLATION [LARGE SCALE ANALYSIS] AT SER-302</scope>
    <scope>IDENTIFICATION BY MASS SPECTROMETRY [LARGE SCALE ANALYSIS]</scope>
</reference>
<reference key="19">
    <citation type="journal article" date="2012" name="Mol. Cell">
        <title>Poly (ADP-ribose) glycohydrolase regulates retinoic acid receptor-mediated gene expression.</title>
        <authorList>
            <person name="Le May N."/>
            <person name="Iltis I."/>
            <person name="Ame J.C."/>
            <person name="Zhovmer A."/>
            <person name="Biard D."/>
            <person name="Egly J.M."/>
            <person name="Schreiber V."/>
            <person name="Coin F."/>
        </authorList>
    </citation>
    <scope>FUNCTION</scope>
</reference>
<reference key="20">
    <citation type="journal article" date="2012" name="Proc. Natl. Acad. Sci. U.S.A.">
        <title>N-terminal acetylome analyses and functional insights of the N-terminal acetyltransferase NatB.</title>
        <authorList>
            <person name="Van Damme P."/>
            <person name="Lasa M."/>
            <person name="Polevoda B."/>
            <person name="Gazquez C."/>
            <person name="Elosegui-Artola A."/>
            <person name="Kim D.S."/>
            <person name="De Juan-Pardo E."/>
            <person name="Demeyer K."/>
            <person name="Hole K."/>
            <person name="Larrea E."/>
            <person name="Timmerman E."/>
            <person name="Prieto J."/>
            <person name="Arnesen T."/>
            <person name="Sherman F."/>
            <person name="Gevaert K."/>
            <person name="Aldabe R."/>
        </authorList>
    </citation>
    <scope>ACETYLATION [LARGE SCALE ANALYSIS] AT MET-1 (ISOFORM 2)</scope>
    <scope>IDENTIFICATION BY MASS SPECTROMETRY [LARGE SCALE ANALYSIS]</scope>
</reference>
<reference key="21">
    <citation type="journal article" date="2013" name="EMBO J.">
        <title>Deficiency of terminal ADP-ribose protein glycohydrolase TARG1/C6orf130 in neurodegenerative disease.</title>
        <authorList>
            <person name="Sharifi R."/>
            <person name="Morra R."/>
            <person name="Appel C.D."/>
            <person name="Tallis M."/>
            <person name="Chioza B."/>
            <person name="Jankevicius G."/>
            <person name="Simpson M.A."/>
            <person name="Matic I."/>
            <person name="Ozkan E."/>
            <person name="Golia B."/>
            <person name="Schellenberg M.J."/>
            <person name="Weston R."/>
            <person name="Williams J.G."/>
            <person name="Rossi M.N."/>
            <person name="Galehdari H."/>
            <person name="Krahn J."/>
            <person name="Wan A."/>
            <person name="Trembath R.C."/>
            <person name="Crosby A.H."/>
            <person name="Ahel D."/>
            <person name="Hay R."/>
            <person name="Ladurner A.G."/>
            <person name="Timinszky G."/>
            <person name="Williams R.S."/>
            <person name="Ahel I."/>
        </authorList>
    </citation>
    <scope>FUNCTION</scope>
    <scope>CATALYTIC ACTIVITY</scope>
</reference>
<reference key="22">
    <citation type="journal article" date="2013" name="Nat. Struct. Mol. Biol.">
        <title>Macrodomain-containing proteins are new mono-ADP-ribosylhydrolases.</title>
        <authorList>
            <person name="Rosenthal F."/>
            <person name="Feijs K.L."/>
            <person name="Frugier E."/>
            <person name="Bonalli M."/>
            <person name="Forst A.H."/>
            <person name="Imhof R."/>
            <person name="Winkler H.C."/>
            <person name="Fischer D."/>
            <person name="Caflisch A."/>
            <person name="Hassa P.O."/>
            <person name="Luescher B."/>
            <person name="Hottiger M.O."/>
        </authorList>
    </citation>
    <scope>FUNCTION</scope>
</reference>
<reference key="23">
    <citation type="journal article" date="2013" name="J. Proteome Res.">
        <title>Toward a comprehensive characterization of a human cancer cell phosphoproteome.</title>
        <authorList>
            <person name="Zhou H."/>
            <person name="Di Palma S."/>
            <person name="Preisinger C."/>
            <person name="Peng M."/>
            <person name="Polat A.N."/>
            <person name="Heck A.J."/>
            <person name="Mohammed S."/>
        </authorList>
    </citation>
    <scope>PHOSPHORYLATION [LARGE SCALE ANALYSIS] AT SER-22; SER-68; SER-133; SER-137; THR-139; SER-286; SER-291; SER-302; SER-316 AND SER-448</scope>
    <scope>IDENTIFICATION BY MASS SPECTROMETRY [LARGE SCALE ANALYSIS]</scope>
    <source>
        <tissue>Cervix carcinoma</tissue>
        <tissue>Erythroleukemia</tissue>
    </source>
</reference>
<reference key="24">
    <citation type="journal article" date="2014" name="J. Proteomics">
        <title>An enzyme assisted RP-RPLC approach for in-depth analysis of human liver phosphoproteome.</title>
        <authorList>
            <person name="Bian Y."/>
            <person name="Song C."/>
            <person name="Cheng K."/>
            <person name="Dong M."/>
            <person name="Wang F."/>
            <person name="Huang J."/>
            <person name="Sun D."/>
            <person name="Wang L."/>
            <person name="Ye M."/>
            <person name="Zou H."/>
        </authorList>
    </citation>
    <scope>PHOSPHORYLATION [LARGE SCALE ANALYSIS] AT SER-261 AND SER-264</scope>
    <scope>IDENTIFICATION BY MASS SPECTROMETRY [LARGE SCALE ANALYSIS]</scope>
    <source>
        <tissue>Liver</tissue>
    </source>
</reference>
<reference key="25">
    <citation type="journal article" date="2014" name="Nucleic Acids Res.">
        <title>PARG is dispensable for recovery from transient replicative stress but required to prevent detrimental accumulation of poly(ADP-ribose) upon prolonged replicative stress.</title>
        <authorList>
            <person name="Illuzzi G."/>
            <person name="Fouquerel E."/>
            <person name="Ame J.C."/>
            <person name="Noll A."/>
            <person name="Rehmet K."/>
            <person name="Nasheuer H.P."/>
            <person name="Dantzer F."/>
            <person name="Schreiber V."/>
        </authorList>
    </citation>
    <scope>FUNCTION</scope>
</reference>
<reference key="26">
    <citation type="journal article" date="2016" name="Science">
        <title>ADP-ribose-derived nuclear ATP synthesis by NUDIX5 is required for chromatin remodeling.</title>
        <authorList>
            <person name="Wright R.H."/>
            <person name="Lioutas A."/>
            <person name="Le Dily F."/>
            <person name="Soronellas D."/>
            <person name="Pohl A."/>
            <person name="Bonet J."/>
            <person name="Nacht A.S."/>
            <person name="Samino S."/>
            <person name="Font-Mateu J."/>
            <person name="Vicent G.P."/>
            <person name="Wierer M."/>
            <person name="Trabado M.A."/>
            <person name="Schelhorn C."/>
            <person name="Carolis C."/>
            <person name="Macias M.J."/>
            <person name="Yanes O."/>
            <person name="Oliva B."/>
            <person name="Beato M."/>
        </authorList>
    </citation>
    <scope>FUNCTION</scope>
    <scope>INTERACTION WITH NUDT5</scope>
</reference>
<reference key="27">
    <citation type="journal article" date="2020" name="Cell">
        <title>An HPF1/PARP1-based chemical biology strategy for exploring ADP-ribosylation.</title>
        <authorList>
            <person name="Bonfiglio J.J."/>
            <person name="Leidecker O."/>
            <person name="Dauben H."/>
            <person name="Longarini E.J."/>
            <person name="Colby T."/>
            <person name="San Segundo-Acosta P."/>
            <person name="Perez K.A."/>
            <person name="Matic I."/>
        </authorList>
    </citation>
    <scope>FUNCTION</scope>
    <scope>CATALYTIC ACTIVITY</scope>
</reference>
<reference key="28">
    <citation type="journal article" date="2021" name="Mol. Cell">
        <title>Unrestrained poly-ADP-ribosylation provides insights into chromatin regulation and human disease.</title>
        <authorList>
            <person name="Prokhorova E."/>
            <person name="Agnew T."/>
            <person name="Wondisford A.R."/>
            <person name="Tellier M."/>
            <person name="Kaminski N."/>
            <person name="Beijer D."/>
            <person name="Holder J."/>
            <person name="Groslambert J."/>
            <person name="Suskiewicz M.J."/>
            <person name="Zhu K."/>
            <person name="Reber J.M."/>
            <person name="Krassnig S.C."/>
            <person name="Palazzo L."/>
            <person name="Murphy S."/>
            <person name="Nielsen M.L."/>
            <person name="Mangerich A."/>
            <person name="Ahel D."/>
            <person name="Baets J."/>
            <person name="O'Sullivan R.J."/>
            <person name="Ahel I."/>
        </authorList>
    </citation>
    <scope>FUNCTION</scope>
</reference>
<reference key="29">
    <citation type="journal article" date="2021" name="Nat. Commun.">
        <title>Mechanistic insights into the three steps of poly(ADP-ribosylation) reversal.</title>
        <authorList>
            <person name="Rack J.G.M."/>
            <person name="Liu Q."/>
            <person name="Zorzini V."/>
            <person name="Voorneveld J."/>
            <person name="Ariza A."/>
            <person name="Honarmand Ebrahimi K."/>
            <person name="Reber J.M."/>
            <person name="Krassnig S.C."/>
            <person name="Ahel D."/>
            <person name="van der Marel G.A."/>
            <person name="Mangerich A."/>
            <person name="McCullagh J.S.O."/>
            <person name="Filippov D.V."/>
            <person name="Ahel I."/>
        </authorList>
    </citation>
    <scope>FUNCTION</scope>
    <scope>MUTAGENESIS OF GLU-756</scope>
</reference>
<reference key="30">
    <citation type="journal article" date="2012" name="PLoS ONE">
        <title>Structures of the human poly (ADP-ribose) glycohydrolase catalytic domain confirm catalytic mechanism and explain inhibition by ADP-HPD derivatives.</title>
        <authorList>
            <person name="Tucker J.A."/>
            <person name="Bennett N."/>
            <person name="Brassington C."/>
            <person name="Durant S.T."/>
            <person name="Hassall G."/>
            <person name="Holdgate G."/>
            <person name="McAlister M."/>
            <person name="Nissink J.W."/>
            <person name="Truman C."/>
            <person name="Watson M."/>
        </authorList>
    </citation>
    <scope>X-RAY CRYSTALLOGRAPHY (1.75 ANGSTROMS) OF 448-976 ALONE AND IN COMPLEX WITH INHIBITORS</scope>
    <scope>ACTIVE SITE</scope>
    <scope>SUBSTRATE-BINDING SITES</scope>
</reference>
<reference key="31">
    <citation type="journal article" date="2018" name="Cell Chem. Biol.">
        <title>(ADP-ribosyl)hydrolases: Structural Basis for Differential Substrate Recognition and Inhibition.</title>
        <authorList>
            <person name="Rack J.G.M."/>
            <person name="Ariza A."/>
            <person name="Drown B.S."/>
            <person name="Henfrey C."/>
            <person name="Bartlett E."/>
            <person name="Shirai T."/>
            <person name="Hergenrother P.J."/>
            <person name="Ahel I."/>
        </authorList>
    </citation>
    <scope>X-RAY CRYSTALLOGRAPHY (1.85 ANGSTROMS) OF 448-976 IN COMPLEX WITH SUBSTRATE</scope>
</reference>
<proteinExistence type="evidence at protein level"/>
<evidence type="ECO:0000250" key="1">
    <source>
        <dbReference type="UniProtKB" id="O88622"/>
    </source>
</evidence>
<evidence type="ECO:0000250" key="2">
    <source>
        <dbReference type="UniProtKB" id="Q9QYM2"/>
    </source>
</evidence>
<evidence type="ECO:0000256" key="3">
    <source>
        <dbReference type="SAM" id="MobiDB-lite"/>
    </source>
</evidence>
<evidence type="ECO:0000269" key="4">
    <source>
    </source>
</evidence>
<evidence type="ECO:0000269" key="5">
    <source>
    </source>
</evidence>
<evidence type="ECO:0000269" key="6">
    <source>
    </source>
</evidence>
<evidence type="ECO:0000269" key="7">
    <source>
    </source>
</evidence>
<evidence type="ECO:0000269" key="8">
    <source>
    </source>
</evidence>
<evidence type="ECO:0000269" key="9">
    <source>
    </source>
</evidence>
<evidence type="ECO:0000269" key="10">
    <source>
    </source>
</evidence>
<evidence type="ECO:0000269" key="11">
    <source>
    </source>
</evidence>
<evidence type="ECO:0000269" key="12">
    <source>
    </source>
</evidence>
<evidence type="ECO:0000269" key="13">
    <source>
    </source>
</evidence>
<evidence type="ECO:0000269" key="14">
    <source>
    </source>
</evidence>
<evidence type="ECO:0000269" key="15">
    <source>
    </source>
</evidence>
<evidence type="ECO:0000269" key="16">
    <source>
    </source>
</evidence>
<evidence type="ECO:0000269" key="17">
    <source>
    </source>
</evidence>
<evidence type="ECO:0000269" key="18">
    <source>
    </source>
</evidence>
<evidence type="ECO:0000269" key="19">
    <source>
    </source>
</evidence>
<evidence type="ECO:0000269" key="20">
    <source>
    </source>
</evidence>
<evidence type="ECO:0000269" key="21">
    <source>
    </source>
</evidence>
<evidence type="ECO:0000269" key="22">
    <source>
    </source>
</evidence>
<evidence type="ECO:0000303" key="23">
    <source>
    </source>
</evidence>
<evidence type="ECO:0000303" key="24">
    <source>
    </source>
</evidence>
<evidence type="ECO:0000303" key="25">
    <source>
    </source>
</evidence>
<evidence type="ECO:0000303" key="26">
    <source>
    </source>
</evidence>
<evidence type="ECO:0000303" key="27">
    <source>
    </source>
</evidence>
<evidence type="ECO:0000305" key="28"/>
<evidence type="ECO:0000312" key="29">
    <source>
        <dbReference type="HGNC" id="HGNC:8605"/>
    </source>
</evidence>
<evidence type="ECO:0007744" key="30">
    <source>
    </source>
</evidence>
<evidence type="ECO:0007744" key="31">
    <source>
    </source>
</evidence>
<evidence type="ECO:0007744" key="32">
    <source>
    </source>
</evidence>
<evidence type="ECO:0007744" key="33">
    <source>
    </source>
</evidence>
<evidence type="ECO:0007744" key="34">
    <source>
    </source>
</evidence>
<evidence type="ECO:0007744" key="35">
    <source>
    </source>
</evidence>
<evidence type="ECO:0007829" key="36">
    <source>
        <dbReference type="PDB" id="6HH6"/>
    </source>
</evidence>
<evidence type="ECO:0007829" key="37">
    <source>
        <dbReference type="PDB" id="6O9X"/>
    </source>
</evidence>
<evidence type="ECO:0007829" key="38">
    <source>
        <dbReference type="PDB" id="6OAL"/>
    </source>
</evidence>
<evidence type="ECO:0007829" key="39">
    <source>
        <dbReference type="PDB" id="7KG1"/>
    </source>
</evidence>
<evidence type="ECO:0007829" key="40">
    <source>
        <dbReference type="PDB" id="7KG8"/>
    </source>
</evidence>
<name>PARG_HUMAN</name>
<feature type="chain" id="PRO_0000066602" description="Poly(ADP-ribose) glycohydrolase">
    <location>
        <begin position="1"/>
        <end position="976"/>
    </location>
</feature>
<feature type="region of interest" description="A-domain" evidence="14">
    <location>
        <begin position="1"/>
        <end position="456"/>
    </location>
</feature>
<feature type="region of interest" description="Disordered" evidence="3">
    <location>
        <begin position="1"/>
        <end position="69"/>
    </location>
</feature>
<feature type="region of interest" description="Disordered" evidence="3">
    <location>
        <begin position="183"/>
        <end position="350"/>
    </location>
</feature>
<feature type="region of interest" description="Catalytic" evidence="14">
    <location>
        <begin position="610"/>
        <end position="795"/>
    </location>
</feature>
<feature type="short sequence motif" description="Nuclear localization signal" evidence="5">
    <location>
        <begin position="10"/>
        <end position="16"/>
    </location>
</feature>
<feature type="short sequence motif" description="PIP-box (PCNA interacting peptide)" evidence="10">
    <location>
        <begin position="76"/>
        <end position="83"/>
    </location>
</feature>
<feature type="compositionally biased region" description="Basic and acidic residues" evidence="3">
    <location>
        <begin position="37"/>
        <end position="46"/>
    </location>
</feature>
<feature type="compositionally biased region" description="Basic and acidic residues" evidence="3">
    <location>
        <begin position="191"/>
        <end position="206"/>
    </location>
</feature>
<feature type="compositionally biased region" description="Basic and acidic residues" evidence="3">
    <location>
        <begin position="222"/>
        <end position="233"/>
    </location>
</feature>
<feature type="compositionally biased region" description="Acidic residues" evidence="3">
    <location>
        <begin position="316"/>
        <end position="331"/>
    </location>
</feature>
<feature type="compositionally biased region" description="Polar residues" evidence="3">
    <location>
        <begin position="332"/>
        <end position="342"/>
    </location>
</feature>
<feature type="active site" evidence="14">
    <location>
        <position position="737"/>
    </location>
</feature>
<feature type="active site" evidence="11 14">
    <location>
        <position position="755"/>
    </location>
</feature>
<feature type="active site" evidence="11 14">
    <location>
        <position position="756"/>
    </location>
</feature>
<feature type="binding site" evidence="14 19">
    <location>
        <begin position="726"/>
        <end position="727"/>
    </location>
    <ligand>
        <name>substrate</name>
    </ligand>
</feature>
<feature type="binding site" evidence="14 19">
    <location>
        <position position="740"/>
    </location>
    <ligand>
        <name>substrate</name>
    </ligand>
</feature>
<feature type="binding site" evidence="14 19">
    <location>
        <position position="754"/>
    </location>
    <ligand>
        <name>substrate</name>
    </ligand>
</feature>
<feature type="binding site" evidence="2">
    <location>
        <position position="795"/>
    </location>
    <ligand>
        <name>substrate</name>
    </ligand>
</feature>
<feature type="binding site" evidence="14 19">
    <location>
        <begin position="869"/>
        <end position="874"/>
    </location>
    <ligand>
        <name>substrate</name>
    </ligand>
</feature>
<feature type="modified residue" description="Phosphoserine" evidence="34">
    <location>
        <position position="22"/>
    </location>
</feature>
<feature type="modified residue" description="Phosphoserine" evidence="34">
    <location>
        <position position="68"/>
    </location>
</feature>
<feature type="modified residue" description="Phosphoserine" evidence="30 34">
    <location>
        <position position="133"/>
    </location>
</feature>
<feature type="modified residue" description="Phosphoserine" evidence="30 34">
    <location>
        <position position="137"/>
    </location>
</feature>
<feature type="modified residue" description="Phosphothreonine" evidence="34">
    <location>
        <position position="139"/>
    </location>
</feature>
<feature type="modified residue" description="Phosphoserine" evidence="9 30 31">
    <location>
        <position position="197"/>
    </location>
</feature>
<feature type="modified residue" description="Phosphothreonine" evidence="9 30 31">
    <location>
        <position position="199"/>
    </location>
</feature>
<feature type="modified residue" description="Phosphoserine" evidence="35">
    <location>
        <position position="261"/>
    </location>
</feature>
<feature type="modified residue" description="Phosphoserine" evidence="35">
    <location>
        <position position="264"/>
    </location>
</feature>
<feature type="modified residue" description="Phosphoserine" evidence="34">
    <location>
        <position position="286"/>
    </location>
</feature>
<feature type="modified residue" description="Phosphoserine" evidence="34">
    <location>
        <position position="291"/>
    </location>
</feature>
<feature type="modified residue" description="Phosphoserine" evidence="9">
    <location>
        <position position="298"/>
    </location>
</feature>
<feature type="modified residue" description="Phosphoserine" evidence="32 34">
    <location>
        <position position="302"/>
    </location>
</feature>
<feature type="modified residue" description="Phosphoserine" evidence="34">
    <location>
        <position position="316"/>
    </location>
</feature>
<feature type="modified residue" description="N6-acetyllysine" evidence="1">
    <location>
        <position position="340"/>
    </location>
</feature>
<feature type="modified residue" description="Phosphoserine" evidence="34">
    <location>
        <position position="448"/>
    </location>
</feature>
<feature type="splice variant" id="VSP_044674" description="In isoform 5." evidence="26">
    <location>
        <begin position="1"/>
        <end position="460"/>
    </location>
</feature>
<feature type="splice variant" id="VSP_011770" description="In isoform 3." evidence="24 25">
    <location>
        <begin position="1"/>
        <end position="108"/>
    </location>
</feature>
<feature type="splice variant" id="VSP_011769" description="In isoform 2." evidence="24 25">
    <location>
        <begin position="1"/>
        <end position="82"/>
    </location>
</feature>
<feature type="splice variant" id="VSP_044675" description="In isoform 4." evidence="27">
    <original>MNAGPGCEPCTKRPR</original>
    <variation>MVQAGAEKDAQSISL</variation>
    <location>
        <begin position="1"/>
        <end position="15"/>
    </location>
</feature>
<feature type="splice variant" id="VSP_044676" description="In isoform 4." evidence="27">
    <location>
        <begin position="16"/>
        <end position="423"/>
    </location>
</feature>
<feature type="splice variant" id="VSP_044677" description="In isoform 4 and isoform 5." evidence="26 27">
    <original>RVDLLRAGEVPKPFPTHYKDLWDNKHVKMPCSEQNLYPVEDE</original>
    <variation>W</variation>
    <location>
        <begin position="485"/>
        <end position="526"/>
    </location>
</feature>
<feature type="mutagenesis site" description="Abolishes nuclear targeting; when associated with G-13." evidence="5">
    <original>K</original>
    <variation>A</variation>
    <location>
        <position position="12"/>
    </location>
</feature>
<feature type="mutagenesis site" description="Abolishes nuclear targeting; when associated with A-12." evidence="5">
    <original>R</original>
    <variation>G</variation>
    <location>
        <position position="13"/>
    </location>
</feature>
<feature type="mutagenesis site" description="No effect." evidence="5">
    <original>R</original>
    <variation>A</variation>
    <location>
        <position position="36"/>
    </location>
</feature>
<feature type="mutagenesis site" description="No effect." evidence="5">
    <original>R</original>
    <variation>G</variation>
    <location>
        <position position="37"/>
    </location>
</feature>
<feature type="mutagenesis site" description="Reduced poly(ADP-ribose) glycohydrolase activity." evidence="11">
    <original>N</original>
    <variation>A</variation>
    <location>
        <position position="740"/>
    </location>
</feature>
<feature type="mutagenesis site" description="Abolished poly(ADP-ribose) glycohydrolase activity." evidence="11">
    <original>E</original>
    <variation>A</variation>
    <location>
        <position position="755"/>
    </location>
</feature>
<feature type="mutagenesis site" description="Abolished poly(ADP-ribose) glycohydrolase activity." evidence="11">
    <original>E</original>
    <variation>A</variation>
    <location>
        <position position="756"/>
    </location>
</feature>
<feature type="mutagenesis site" description="Reduces hydrolase activity." evidence="22">
    <original>E</original>
    <variation>N</variation>
    <location>
        <position position="756"/>
    </location>
</feature>
<feature type="mutagenesis site" description="Reduced poly(ADP-ribose) glycohydrolase activity." evidence="11">
    <original>A</original>
    <variation>W</variation>
    <location>
        <position position="874"/>
    </location>
</feature>
<feature type="mutagenesis site" description="Abolished poly(ADP-ribose) glycohydrolase activity." evidence="11">
    <original>F</original>
    <variation>A</variation>
    <location>
        <position position="875"/>
    </location>
</feature>
<feature type="sequence conflict" description="In Ref. 3; AAB61614." evidence="28" ref="3">
    <original>RP</original>
    <variation>AT</variation>
    <location>
        <begin position="13"/>
        <end position="14"/>
    </location>
</feature>
<feature type="sequence conflict" description="In Ref. 3; AAB61614." evidence="28" ref="3">
    <original>R</original>
    <variation>Q</variation>
    <location>
        <position position="61"/>
    </location>
</feature>
<feature type="sequence conflict" description="In Ref. 3; AAB61614." evidence="28" ref="3">
    <original>E</original>
    <variation>V</variation>
    <location>
        <position position="127"/>
    </location>
</feature>
<feature type="sequence conflict" description="In Ref. 3; AAB61614." evidence="28" ref="3">
    <original>P</original>
    <variation>L</variation>
    <location>
        <position position="138"/>
    </location>
</feature>
<feature type="sequence conflict" description="In Ref. 3; AAB61614." evidence="28" ref="3">
    <original>Q</original>
    <variation>H</variation>
    <location>
        <position position="227"/>
    </location>
</feature>
<feature type="sequence conflict" description="In Ref. 3; AAB61614." evidence="28" ref="3">
    <original>D</original>
    <variation>H</variation>
    <location>
        <position position="242"/>
    </location>
</feature>
<feature type="sequence conflict" description="In Ref. 3; AAB61614." evidence="28" ref="3">
    <original>E</original>
    <variation>K</variation>
    <location>
        <position position="260"/>
    </location>
</feature>
<feature type="sequence conflict" description="In Ref. 3; AAB61614." evidence="28" ref="3">
    <original>P</original>
    <variation>S</variation>
    <location>
        <position position="275"/>
    </location>
</feature>
<feature type="sequence conflict" description="In Ref. 3; AAB61614." evidence="28" ref="3">
    <original>T</original>
    <variation>I</variation>
    <location>
        <position position="282"/>
    </location>
</feature>
<feature type="sequence conflict" description="In Ref. 3; AAB61614." evidence="28" ref="3">
    <original>F</original>
    <variation>L</variation>
    <location>
        <position position="414"/>
    </location>
</feature>
<feature type="sequence conflict" description="In Ref. 5; AFM56043." evidence="28" ref="5">
    <original>R</original>
    <variation>Q</variation>
    <location>
        <position position="466"/>
    </location>
</feature>
<feature type="sequence conflict" description="In Ref. 5; AFM56043." evidence="28" ref="5">
    <original>I</original>
    <variation>V</variation>
    <location>
        <position position="484"/>
    </location>
</feature>
<feature type="sequence conflict" description="In Ref. 3; AAB61614." evidence="28" ref="3">
    <original>WQ</original>
    <variation>CE</variation>
    <location>
        <begin position="814"/>
        <end position="815"/>
    </location>
</feature>
<feature type="sequence conflict" description="In Ref. 7; AAH52966." evidence="28" ref="7">
    <original>R</original>
    <variation>H</variation>
    <location>
        <position position="817"/>
    </location>
</feature>
<feature type="strand" evidence="40">
    <location>
        <begin position="453"/>
        <end position="456"/>
    </location>
</feature>
<feature type="helix" evidence="40">
    <location>
        <begin position="458"/>
        <end position="460"/>
    </location>
</feature>
<feature type="turn" evidence="40">
    <location>
        <begin position="464"/>
        <end position="467"/>
    </location>
</feature>
<feature type="strand" evidence="40">
    <location>
        <begin position="480"/>
        <end position="482"/>
    </location>
</feature>
<feature type="helix" evidence="40">
    <location>
        <begin position="486"/>
        <end position="488"/>
    </location>
</feature>
<feature type="strand" evidence="40">
    <location>
        <begin position="497"/>
        <end position="501"/>
    </location>
</feature>
<feature type="strand" evidence="37">
    <location>
        <begin position="520"/>
        <end position="522"/>
    </location>
</feature>
<feature type="strand" evidence="37">
    <location>
        <begin position="532"/>
        <end position="534"/>
    </location>
</feature>
<feature type="helix" evidence="40">
    <location>
        <begin position="535"/>
        <end position="543"/>
    </location>
</feature>
<feature type="helix" evidence="40">
    <location>
        <begin position="550"/>
        <end position="559"/>
    </location>
</feature>
<feature type="helix" evidence="40">
    <location>
        <begin position="562"/>
        <end position="564"/>
    </location>
</feature>
<feature type="turn" evidence="40">
    <location>
        <begin position="565"/>
        <end position="567"/>
    </location>
</feature>
<feature type="helix" evidence="40">
    <location>
        <begin position="571"/>
        <end position="579"/>
    </location>
</feature>
<feature type="helix" evidence="40">
    <location>
        <begin position="583"/>
        <end position="591"/>
    </location>
</feature>
<feature type="helix" evidence="40">
    <location>
        <begin position="593"/>
        <end position="602"/>
    </location>
</feature>
<feature type="helix" evidence="40">
    <location>
        <begin position="604"/>
        <end position="607"/>
    </location>
</feature>
<feature type="strand" evidence="40">
    <location>
        <begin position="621"/>
        <end position="626"/>
    </location>
</feature>
<feature type="helix" evidence="40">
    <location>
        <begin position="627"/>
        <end position="638"/>
    </location>
</feature>
<feature type="turn" evidence="40">
    <location>
        <begin position="652"/>
        <end position="655"/>
    </location>
</feature>
<feature type="helix" evidence="40">
    <location>
        <begin position="662"/>
        <end position="665"/>
    </location>
</feature>
<feature type="helix" evidence="40">
    <location>
        <begin position="671"/>
        <end position="688"/>
    </location>
</feature>
<feature type="strand" evidence="40">
    <location>
        <begin position="694"/>
        <end position="701"/>
    </location>
</feature>
<feature type="helix" evidence="40">
    <location>
        <begin position="708"/>
        <end position="710"/>
    </location>
</feature>
<feature type="strand" evidence="40">
    <location>
        <begin position="718"/>
        <end position="724"/>
    </location>
</feature>
<feature type="helix" evidence="40">
    <location>
        <begin position="726"/>
        <end position="729"/>
    </location>
</feature>
<feature type="turn" evidence="38">
    <location>
        <begin position="730"/>
        <end position="732"/>
    </location>
</feature>
<feature type="strand" evidence="40">
    <location>
        <begin position="733"/>
        <end position="739"/>
    </location>
</feature>
<feature type="turn" evidence="40">
    <location>
        <begin position="743"/>
        <end position="750"/>
    </location>
</feature>
<feature type="helix" evidence="40">
    <location>
        <begin position="754"/>
        <end position="761"/>
    </location>
</feature>
<feature type="helix" evidence="40">
    <location>
        <begin position="763"/>
        <end position="767"/>
    </location>
</feature>
<feature type="helix" evidence="40">
    <location>
        <begin position="768"/>
        <end position="771"/>
    </location>
</feature>
<feature type="strand" evidence="40">
    <location>
        <begin position="779"/>
        <end position="784"/>
    </location>
</feature>
<feature type="strand" evidence="40">
    <location>
        <begin position="790"/>
        <end position="793"/>
    </location>
</feature>
<feature type="helix" evidence="40">
    <location>
        <begin position="796"/>
        <end position="798"/>
    </location>
</feature>
<feature type="strand" evidence="40">
    <location>
        <begin position="800"/>
        <end position="804"/>
    </location>
</feature>
<feature type="strand" evidence="36">
    <location>
        <begin position="815"/>
        <end position="818"/>
    </location>
</feature>
<feature type="strand" evidence="40">
    <location>
        <begin position="820"/>
        <end position="825"/>
    </location>
</feature>
<feature type="helix" evidence="40">
    <location>
        <begin position="832"/>
        <end position="836"/>
    </location>
</feature>
<feature type="helix" evidence="40">
    <location>
        <begin position="838"/>
        <end position="852"/>
    </location>
</feature>
<feature type="helix" evidence="40">
    <location>
        <begin position="859"/>
        <end position="861"/>
    </location>
</feature>
<feature type="strand" evidence="40">
    <location>
        <begin position="865"/>
        <end position="868"/>
    </location>
</feature>
<feature type="helix" evidence="40">
    <location>
        <begin position="873"/>
        <end position="875"/>
    </location>
</feature>
<feature type="helix" evidence="40">
    <location>
        <begin position="879"/>
        <end position="892"/>
    </location>
</feature>
<feature type="strand" evidence="40">
    <location>
        <begin position="897"/>
        <end position="900"/>
    </location>
</feature>
<feature type="helix" evidence="40">
    <location>
        <begin position="905"/>
        <end position="920"/>
    </location>
</feature>
<feature type="helix" evidence="40">
    <location>
        <begin position="925"/>
        <end position="939"/>
    </location>
</feature>
<feature type="turn" evidence="40">
    <location>
        <begin position="940"/>
        <end position="942"/>
    </location>
</feature>
<feature type="strand" evidence="39">
    <location>
        <begin position="945"/>
        <end position="947"/>
    </location>
</feature>
<feature type="helix" evidence="40">
    <location>
        <begin position="952"/>
        <end position="961"/>
    </location>
</feature>
<feature type="modified residue" description="N-acetylmethionine" evidence="33">
    <location sequence="Q86W56-2">
        <position position="1"/>
    </location>
</feature>
<comment type="function">
    <text evidence="6 11 13 15 16 17 18 20 21 22">Poly(ADP-ribose) glycohydrolase that degrades poly(ADP-ribose) by hydrolyzing the ribose-ribose bonds present in poly(ADP-ribose) (PubMed:15450800, PubMed:21892188, PubMed:23102699, PubMed:23474714, PubMed:33186521, PubMed:34019811, PubMed:34321462). PARG acts both as an endo- and exoglycosidase, releasing poly(ADP-ribose) of different length as well as ADP-ribose monomers (PubMed:23102699, PubMed:23481255). It is however unable to cleave the ester bond between the terminal ADP-ribose and ADP-ribosylated residues, leaving proteins that are mono-ADP-ribosylated (PubMed:21892188, PubMed:23474714, PubMed:33186521). Poly(ADP-ribose) is synthesized after DNA damage is only present transiently and is rapidly degraded by PARG (PubMed:23102699, PubMed:34019811). Required to prevent detrimental accumulation of poly(ADP-ribose) upon prolonged replicative stress, while it is not required for recovery from transient replicative stress (PubMed:24906880). Responsible for the prevalence of mono-ADP-ribosylated proteins in cells, thanks to its ability to degrade poly(ADP-ribose) without cleaving the terminal protein-ribose bond (PubMed:33186521). Required for retinoid acid-dependent gene transactivation, probably by removing poly(ADP-ribose) from histone demethylase KDM4D, allowing chromatin derepression at RAR-dependent gene promoters (PubMed:23102699). Involved in the synthesis of ATP in the nucleus, together with PARP1, NMNAT1 and NUDT5 (PubMed:27257257). Nuclear ATP generation is required for extensive chromatin remodeling events that are energy-consuming (PubMed:27257257).</text>
</comment>
<comment type="catalytic activity">
    <reaction evidence="11 16 20">
        <text>[(1''-&gt;2')-ADP-alpha-D-ribose](n) + H2O = [(1''-&gt;2')-ADP-alpha-D-ribose](n-1) + ADP-D-ribose</text>
        <dbReference type="Rhea" id="RHEA:52216"/>
        <dbReference type="Rhea" id="RHEA-COMP:16922"/>
        <dbReference type="Rhea" id="RHEA-COMP:16923"/>
        <dbReference type="ChEBI" id="CHEBI:15377"/>
        <dbReference type="ChEBI" id="CHEBI:57967"/>
        <dbReference type="ChEBI" id="CHEBI:142512"/>
        <dbReference type="EC" id="3.2.1.143"/>
    </reaction>
    <physiologicalReaction direction="left-to-right" evidence="11 16 20">
        <dbReference type="Rhea" id="RHEA:52217"/>
    </physiologicalReaction>
</comment>
<comment type="subunit">
    <text evidence="10 18">Interacts with PCNA (PubMed:21398629). Interacts with NUDT5 (PubMed:27257257).</text>
</comment>
<comment type="subcellular location">
    <molecule>Isoform 1</molecule>
    <subcellularLocation>
        <location evidence="7 10">Nucleus</location>
    </subcellularLocation>
    <text evidence="7 10">Colocalizes with PCNA at replication foci (PubMed:21398629). Relocalizes to the cytoplasm in response to DNA damage (PubMed:16460818).</text>
</comment>
<comment type="subcellular location">
    <molecule>Isoform 2</molecule>
    <subcellularLocation>
        <location evidence="5 7">Cytoplasm</location>
    </subcellularLocation>
    <text evidence="7">Translocates to the nucleus in response to DNA damage.</text>
</comment>
<comment type="subcellular location">
    <molecule>Isoform 3</molecule>
    <subcellularLocation>
        <location evidence="5">Cytoplasm</location>
    </subcellularLocation>
</comment>
<comment type="subcellular location">
    <molecule>Isoform 4</molecule>
    <subcellularLocation>
        <location evidence="12">Cytoplasm</location>
    </subcellularLocation>
    <subcellularLocation>
        <location evidence="12">Mitochondrion</location>
    </subcellularLocation>
</comment>
<comment type="subcellular location">
    <molecule>Isoform 5</molecule>
    <subcellularLocation>
        <location evidence="8">Mitochondrion matrix</location>
    </subcellularLocation>
</comment>
<comment type="alternative products">
    <event type="alternative splicing"/>
    <isoform>
        <id>Q86W56-1</id>
        <name>1</name>
        <name>hPARG111</name>
        <sequence type="displayed"/>
    </isoform>
    <isoform>
        <id>Q86W56-2</id>
        <name>2</name>
        <name>hPARG102</name>
        <sequence type="described" ref="VSP_011769"/>
    </isoform>
    <isoform>
        <id>Q86W56-3</id>
        <name>3</name>
        <name>hPARG99</name>
        <sequence type="described" ref="VSP_011770"/>
    </isoform>
    <isoform>
        <id>Q86W56-4</id>
        <name>4</name>
        <name>hPARG60</name>
        <sequence type="described" ref="VSP_044675 VSP_044676 VSP_044677"/>
    </isoform>
    <isoform>
        <id>Q86W56-5</id>
        <name>5</name>
        <name>hPARG55</name>
        <sequence type="described" ref="VSP_044674 VSP_044677"/>
    </isoform>
</comment>
<comment type="tissue specificity">
    <text evidence="4">Ubiquitously expressed.</text>
</comment>
<comment type="domain">
    <text evidence="10">The PIP-box mediates interaction with PCNA and localization to replication foci.</text>
</comment>
<comment type="miscellaneous">
    <molecule>Isoform 4</molecule>
    <text evidence="28">Catalytically inactive.</text>
</comment>
<comment type="miscellaneous">
    <molecule>Isoform 5</molecule>
    <text evidence="28">Catalytically inactive.</text>
</comment>
<comment type="similarity">
    <text evidence="28">Belongs to the poly(ADP-ribose) glycohydrolase family.</text>
</comment>
<gene>
    <name evidence="23 29" type="primary">PARG</name>
</gene>
<protein>
    <recommendedName>
        <fullName evidence="23">Poly(ADP-ribose) glycohydrolase</fullName>
        <ecNumber evidence="11 16">3.2.1.143</ecNumber>
    </recommendedName>
</protein>